<organism>
    <name type="scientific">Drosophila persimilis</name>
    <name type="common">Fruit fly</name>
    <dbReference type="NCBI Taxonomy" id="7234"/>
    <lineage>
        <taxon>Eukaryota</taxon>
        <taxon>Metazoa</taxon>
        <taxon>Ecdysozoa</taxon>
        <taxon>Arthropoda</taxon>
        <taxon>Hexapoda</taxon>
        <taxon>Insecta</taxon>
        <taxon>Pterygota</taxon>
        <taxon>Neoptera</taxon>
        <taxon>Endopterygota</taxon>
        <taxon>Diptera</taxon>
        <taxon>Brachycera</taxon>
        <taxon>Muscomorpha</taxon>
        <taxon>Ephydroidea</taxon>
        <taxon>Drosophilidae</taxon>
        <taxon>Drosophila</taxon>
        <taxon>Sophophora</taxon>
    </lineage>
</organism>
<name>DRE2_DROPE</name>
<protein>
    <recommendedName>
        <fullName evidence="1">Anamorsin homolog</fullName>
    </recommendedName>
    <alternativeName>
        <fullName evidence="1">Fe-S cluster assembly protein DRE2 homolog</fullName>
    </alternativeName>
</protein>
<comment type="function">
    <text evidence="1">Component of the cytosolic iron-sulfur (Fe-S) protein assembly (CIA) machinery. Required for the maturation of extramitochondrial Fe-S proteins. Part of an electron transfer chain functioning in an early step of cytosolic Fe-S biogenesis, facilitating the de novo assembly of a [4Fe-4S] cluster on the cytosolic Fe-S scaffold complex. Electrons are transferred from NADPH via a FAD- and FMN-containing diflavin oxidoreductase. Together with the diflavin oxidoreductase, also required for the assembly of the diferric tyrosyl radical cofactor of ribonucleotide reductase (RNR), probably by providing electrons for reduction during radical cofactor maturation in the catalytic small subunit.</text>
</comment>
<comment type="cofactor">
    <cofactor evidence="1">
        <name>[2Fe-2S] cluster</name>
        <dbReference type="ChEBI" id="CHEBI:190135"/>
    </cofactor>
</comment>
<comment type="cofactor">
    <cofactor evidence="1">
        <name>[4Fe-4S] cluster</name>
        <dbReference type="ChEBI" id="CHEBI:49883"/>
    </cofactor>
</comment>
<comment type="subunit">
    <text evidence="1">Monomer.</text>
</comment>
<comment type="subcellular location">
    <subcellularLocation>
        <location evidence="1">Cytoplasm</location>
    </subcellularLocation>
    <subcellularLocation>
        <location evidence="1">Mitochondrion intermembrane space</location>
    </subcellularLocation>
</comment>
<comment type="domain">
    <text evidence="1">The C-terminal domain binds 2 Fe-S clusters but is otherwise mostly in an intrinsically disordered conformation.</text>
</comment>
<comment type="domain">
    <text evidence="1">The N-terminal domain has structural similarity with S-adenosyl-L-methionine-dependent methyltransferases, but does not bind S-adenosyl-L-methionine. It is required for correct assembly of the 2 Fe-S clusters.</text>
</comment>
<comment type="domain">
    <text evidence="1">The twin Cx2C motifs are involved in the recognition by the mitochondrial MIA40-ERV1 disulfide relay system. The formation of 2 disulfide bonds in the Cx2C motifs through dithiol/disulfide exchange reactions effectively traps the protein in the mitochondrial intermembrane space.</text>
</comment>
<comment type="similarity">
    <text evidence="1">Belongs to the anamorsin family.</text>
</comment>
<gene>
    <name evidence="1" type="primary">CIAPIN1</name>
    <name evidence="1" type="synonym">l(2)35Bg</name>
    <name type="ORF">GL25729</name>
</gene>
<reference key="1">
    <citation type="journal article" date="2007" name="Nature">
        <title>Evolution of genes and genomes on the Drosophila phylogeny.</title>
        <authorList>
            <consortium name="Drosophila 12 genomes consortium"/>
        </authorList>
    </citation>
    <scope>NUCLEOTIDE SEQUENCE [LARGE SCALE GENOMIC DNA]</scope>
    <source>
        <strain>MSH-3 / Tucson 14011-0111.49</strain>
    </source>
</reference>
<accession>B4GK79</accession>
<feature type="chain" id="PRO_0000392319" description="Anamorsin homolog">
    <location>
        <begin position="1"/>
        <end position="247"/>
    </location>
</feature>
<feature type="region of interest" description="N-terminal SAM-like domain" evidence="1">
    <location>
        <begin position="4"/>
        <end position="128"/>
    </location>
</feature>
<feature type="region of interest" description="Linker" evidence="1">
    <location>
        <begin position="129"/>
        <end position="160"/>
    </location>
</feature>
<feature type="region of interest" description="Fe-S binding site A" evidence="1">
    <location>
        <begin position="171"/>
        <end position="185"/>
    </location>
</feature>
<feature type="region of interest" description="Fe-S binding site B" evidence="1">
    <location>
        <begin position="208"/>
        <end position="222"/>
    </location>
</feature>
<feature type="short sequence motif" description="Cx2C motif 1" evidence="1">
    <location>
        <begin position="208"/>
        <end position="211"/>
    </location>
</feature>
<feature type="short sequence motif" description="Cx2C motif 2" evidence="1">
    <location>
        <begin position="219"/>
        <end position="222"/>
    </location>
</feature>
<feature type="binding site" evidence="1">
    <location>
        <position position="171"/>
    </location>
    <ligand>
        <name>[2Fe-2S] cluster</name>
        <dbReference type="ChEBI" id="CHEBI:190135"/>
    </ligand>
</feature>
<feature type="binding site" evidence="1">
    <location>
        <position position="180"/>
    </location>
    <ligand>
        <name>[2Fe-2S] cluster</name>
        <dbReference type="ChEBI" id="CHEBI:190135"/>
    </ligand>
</feature>
<feature type="binding site" evidence="1">
    <location>
        <position position="183"/>
    </location>
    <ligand>
        <name>[2Fe-2S] cluster</name>
        <dbReference type="ChEBI" id="CHEBI:190135"/>
    </ligand>
</feature>
<feature type="binding site" evidence="1">
    <location>
        <position position="185"/>
    </location>
    <ligand>
        <name>[2Fe-2S] cluster</name>
        <dbReference type="ChEBI" id="CHEBI:190135"/>
    </ligand>
</feature>
<feature type="binding site" evidence="1">
    <location>
        <position position="208"/>
    </location>
    <ligand>
        <name>[4Fe-4S] cluster</name>
        <dbReference type="ChEBI" id="CHEBI:49883"/>
    </ligand>
</feature>
<feature type="binding site" evidence="1">
    <location>
        <position position="211"/>
    </location>
    <ligand>
        <name>[4Fe-4S] cluster</name>
        <dbReference type="ChEBI" id="CHEBI:49883"/>
    </ligand>
</feature>
<feature type="binding site" evidence="1">
    <location>
        <position position="219"/>
    </location>
    <ligand>
        <name>[4Fe-4S] cluster</name>
        <dbReference type="ChEBI" id="CHEBI:49883"/>
    </ligand>
</feature>
<feature type="binding site" evidence="1">
    <location>
        <position position="222"/>
    </location>
    <ligand>
        <name>[4Fe-4S] cluster</name>
        <dbReference type="ChEBI" id="CHEBI:49883"/>
    </ligand>
</feature>
<dbReference type="EMBL" id="CH479184">
    <property type="protein sequence ID" value="EDW37045.1"/>
    <property type="molecule type" value="Genomic_DNA"/>
</dbReference>
<dbReference type="STRING" id="7234.B4GK79"/>
<dbReference type="EnsemblMetazoa" id="FBtr0191344">
    <property type="protein sequence ID" value="FBpp0189836"/>
    <property type="gene ID" value="FBgn0163313"/>
</dbReference>
<dbReference type="EnsemblMetazoa" id="XM_002018813.2">
    <property type="protein sequence ID" value="XP_002018849.1"/>
    <property type="gene ID" value="LOC6593745"/>
</dbReference>
<dbReference type="GeneID" id="6593745"/>
<dbReference type="KEGG" id="dpe:6593745"/>
<dbReference type="CTD" id="57019"/>
<dbReference type="eggNOG" id="KOG4020">
    <property type="taxonomic scope" value="Eukaryota"/>
</dbReference>
<dbReference type="HOGENOM" id="CLU_064393_1_0_1"/>
<dbReference type="OMA" id="GFINCRE"/>
<dbReference type="OrthoDB" id="311633at2759"/>
<dbReference type="PhylomeDB" id="B4GK79"/>
<dbReference type="Proteomes" id="UP000008744">
    <property type="component" value="Unassembled WGS sequence"/>
</dbReference>
<dbReference type="GO" id="GO:0005758">
    <property type="term" value="C:mitochondrial intermembrane space"/>
    <property type="evidence" value="ECO:0007669"/>
    <property type="project" value="UniProtKB-SubCell"/>
</dbReference>
<dbReference type="GO" id="GO:0051537">
    <property type="term" value="F:2 iron, 2 sulfur cluster binding"/>
    <property type="evidence" value="ECO:0007669"/>
    <property type="project" value="UniProtKB-UniRule"/>
</dbReference>
<dbReference type="GO" id="GO:0051539">
    <property type="term" value="F:4 iron, 4 sulfur cluster binding"/>
    <property type="evidence" value="ECO:0007669"/>
    <property type="project" value="UniProtKB-KW"/>
</dbReference>
<dbReference type="GO" id="GO:0009055">
    <property type="term" value="F:electron transfer activity"/>
    <property type="evidence" value="ECO:0007669"/>
    <property type="project" value="UniProtKB-UniRule"/>
</dbReference>
<dbReference type="GO" id="GO:0046872">
    <property type="term" value="F:metal ion binding"/>
    <property type="evidence" value="ECO:0007669"/>
    <property type="project" value="UniProtKB-KW"/>
</dbReference>
<dbReference type="GO" id="GO:0016226">
    <property type="term" value="P:iron-sulfur cluster assembly"/>
    <property type="evidence" value="ECO:0007669"/>
    <property type="project" value="UniProtKB-UniRule"/>
</dbReference>
<dbReference type="Gene3D" id="3.40.50.150">
    <property type="entry name" value="Vaccinia Virus protein VP39"/>
    <property type="match status" value="1"/>
</dbReference>
<dbReference type="HAMAP" id="MF_03115">
    <property type="entry name" value="Anamorsin"/>
    <property type="match status" value="1"/>
</dbReference>
<dbReference type="InterPro" id="IPR007785">
    <property type="entry name" value="Anamorsin"/>
</dbReference>
<dbReference type="InterPro" id="IPR049011">
    <property type="entry name" value="Anamorsin_N_metazoan"/>
</dbReference>
<dbReference type="InterPro" id="IPR046408">
    <property type="entry name" value="CIAPIN1"/>
</dbReference>
<dbReference type="InterPro" id="IPR029063">
    <property type="entry name" value="SAM-dependent_MTases_sf"/>
</dbReference>
<dbReference type="PANTHER" id="PTHR13273">
    <property type="entry name" value="ANAMORSIN"/>
    <property type="match status" value="1"/>
</dbReference>
<dbReference type="PANTHER" id="PTHR13273:SF14">
    <property type="entry name" value="ANAMORSIN"/>
    <property type="match status" value="1"/>
</dbReference>
<dbReference type="Pfam" id="PF20922">
    <property type="entry name" value="Anamorsin_N"/>
    <property type="match status" value="1"/>
</dbReference>
<dbReference type="Pfam" id="PF05093">
    <property type="entry name" value="CIAPIN1"/>
    <property type="match status" value="2"/>
</dbReference>
<proteinExistence type="inferred from homology"/>
<sequence>MEQFKGLQKSLYIWTDSADLDKRVEQLKTATGGEVAVENVHRLSFSSYANSSFDLIVIECAQLTDNYVKLLHMLKPSGKLHLFSFIGPASSLLQEIKLSGFINCSEGTDTLTAEKPGYETGSSARLSFAKKNASALNVWKISGDDEELIDEEDLLDEEDKQKPDPAGLKVCSTTGKRKACKNCSCGLAEELESEKQTATASENAKSSCGNCYLGDAFRCSTCPYLGMPAFKPGEKVQLADNLLKSDI</sequence>
<keyword id="KW-0001">2Fe-2S</keyword>
<keyword id="KW-0004">4Fe-4S</keyword>
<keyword id="KW-0963">Cytoplasm</keyword>
<keyword id="KW-0408">Iron</keyword>
<keyword id="KW-0411">Iron-sulfur</keyword>
<keyword id="KW-0479">Metal-binding</keyword>
<keyword id="KW-0496">Mitochondrion</keyword>
<keyword id="KW-1185">Reference proteome</keyword>
<evidence type="ECO:0000255" key="1">
    <source>
        <dbReference type="HAMAP-Rule" id="MF_03115"/>
    </source>
</evidence>